<keyword id="KW-0007">Acetylation</keyword>
<keyword id="KW-0963">Cytoplasm</keyword>
<keyword id="KW-0417">Keratinization</keyword>
<keyword id="KW-1185">Reference proteome</keyword>
<keyword id="KW-0677">Repeat</keyword>
<sequence length="126" mass="14044">MSSQQQKQPCTLPPQLQQHQVKQPCQPPPQEPCVPKTKEPCQPKVPEPCQPKVPEPCQPKVPEPCQPKVPQPCQPKVPEPCQPKVPEPCQPKVPEPCQPKVPEPCQSKVPQPCQPKVPEPCQTKQK</sequence>
<dbReference type="PIR" id="A46375">
    <property type="entry name" value="A46375"/>
</dbReference>
<dbReference type="PaxDb" id="9986-ENSOCUP00000025830"/>
<dbReference type="Ensembl" id="ENSOCUT00000027006.2">
    <property type="protein sequence ID" value="ENSOCUP00000025830.2"/>
    <property type="gene ID" value="ENSOCUG00000026830.2"/>
</dbReference>
<dbReference type="eggNOG" id="ENOG502SCIR">
    <property type="taxonomic scope" value="Eukaryota"/>
</dbReference>
<dbReference type="GeneTree" id="ENSGT00940000163019"/>
<dbReference type="InParanoid" id="P35324"/>
<dbReference type="Proteomes" id="UP000001811">
    <property type="component" value="Chromosome 13"/>
</dbReference>
<dbReference type="Bgee" id="ENSOCUG00000026830">
    <property type="expression patterns" value="Expressed in skin of back and 13 other cell types or tissues"/>
</dbReference>
<dbReference type="ExpressionAtlas" id="P35324">
    <property type="expression patterns" value="baseline"/>
</dbReference>
<dbReference type="GO" id="GO:0005737">
    <property type="term" value="C:cytoplasm"/>
    <property type="evidence" value="ECO:0007669"/>
    <property type="project" value="UniProtKB-SubCell"/>
</dbReference>
<dbReference type="GO" id="GO:0031424">
    <property type="term" value="P:keratinization"/>
    <property type="evidence" value="ECO:0007669"/>
    <property type="project" value="UniProtKB-KW"/>
</dbReference>
<dbReference type="Pfam" id="PF02389">
    <property type="entry name" value="Cornifin"/>
    <property type="match status" value="1"/>
</dbReference>
<dbReference type="PRINTS" id="PR00021">
    <property type="entry name" value="PRORICH"/>
</dbReference>
<feature type="initiator methionine" description="Removed" evidence="1">
    <location>
        <position position="1"/>
    </location>
</feature>
<feature type="chain" id="PRO_0000150002" description="Cornifin alpha">
    <location>
        <begin position="2"/>
        <end position="126"/>
    </location>
</feature>
<feature type="repeat" description="1">
    <location>
        <begin position="3"/>
        <end position="14"/>
    </location>
</feature>
<feature type="repeat" description="2">
    <location>
        <begin position="18"/>
        <end position="29"/>
    </location>
</feature>
<feature type="repeat" description="1">
    <location>
        <begin position="31"/>
        <end position="38"/>
    </location>
</feature>
<feature type="repeat" description="2">
    <location>
        <begin position="39"/>
        <end position="46"/>
    </location>
</feature>
<feature type="repeat" description="3">
    <location>
        <begin position="47"/>
        <end position="54"/>
    </location>
</feature>
<feature type="repeat" description="4">
    <location>
        <begin position="55"/>
        <end position="62"/>
    </location>
</feature>
<feature type="repeat" description="5">
    <location>
        <begin position="63"/>
        <end position="70"/>
    </location>
</feature>
<feature type="repeat" description="6">
    <location>
        <begin position="71"/>
        <end position="78"/>
    </location>
</feature>
<feature type="repeat" description="7">
    <location>
        <begin position="79"/>
        <end position="86"/>
    </location>
</feature>
<feature type="repeat" description="8">
    <location>
        <begin position="87"/>
        <end position="94"/>
    </location>
</feature>
<feature type="repeat" description="9">
    <location>
        <begin position="95"/>
        <end position="102"/>
    </location>
</feature>
<feature type="repeat" description="10">
    <location>
        <begin position="103"/>
        <end position="110"/>
    </location>
</feature>
<feature type="repeat" description="11">
    <location>
        <begin position="111"/>
        <end position="118"/>
    </location>
</feature>
<feature type="region of interest" description="2 X 12 AA approximate repeats">
    <location>
        <begin position="3"/>
        <end position="29"/>
    </location>
</feature>
<feature type="region of interest" description="Disordered" evidence="2">
    <location>
        <begin position="20"/>
        <end position="43"/>
    </location>
</feature>
<feature type="region of interest" description="11 X 8 AA approximate tandem repeats">
    <location>
        <begin position="31"/>
        <end position="122"/>
    </location>
</feature>
<feature type="region of interest" description="Disordered" evidence="2">
    <location>
        <begin position="104"/>
        <end position="126"/>
    </location>
</feature>
<feature type="modified residue" description="N-acetylserine" evidence="1">
    <location>
        <position position="2"/>
    </location>
</feature>
<evidence type="ECO:0000250" key="1">
    <source>
        <dbReference type="UniProtKB" id="Q9UBC9"/>
    </source>
</evidence>
<evidence type="ECO:0000256" key="2">
    <source>
        <dbReference type="SAM" id="MobiDB-lite"/>
    </source>
</evidence>
<evidence type="ECO:0000305" key="3"/>
<name>SPRR1_RABIT</name>
<reference key="1">
    <citation type="journal article" date="1992" name="Proc. Natl. Acad. Sci. U.S.A.">
        <title>Cornifin, a cross-linked envelope precursor in keratinocytes that is down-regulated by retinoids.</title>
        <authorList>
            <person name="Marvin K.W."/>
            <person name="George M.D."/>
            <person name="Fujimoto W."/>
            <person name="Saunders N.A."/>
            <person name="Bernacki S.H."/>
            <person name="Jetten A.M."/>
        </authorList>
    </citation>
    <scope>NUCLEOTIDE SEQUENCE</scope>
    <source>
        <tissue>Trachea</tissue>
    </source>
</reference>
<organism>
    <name type="scientific">Oryctolagus cuniculus</name>
    <name type="common">Rabbit</name>
    <dbReference type="NCBI Taxonomy" id="9986"/>
    <lineage>
        <taxon>Eukaryota</taxon>
        <taxon>Metazoa</taxon>
        <taxon>Chordata</taxon>
        <taxon>Craniata</taxon>
        <taxon>Vertebrata</taxon>
        <taxon>Euteleostomi</taxon>
        <taxon>Mammalia</taxon>
        <taxon>Eutheria</taxon>
        <taxon>Euarchontoglires</taxon>
        <taxon>Glires</taxon>
        <taxon>Lagomorpha</taxon>
        <taxon>Leporidae</taxon>
        <taxon>Oryctolagus</taxon>
    </lineage>
</organism>
<proteinExistence type="evidence at transcript level"/>
<protein>
    <recommendedName>
        <fullName>Cornifin alpha</fullName>
    </recommendedName>
    <alternativeName>
        <fullName>Small proline-rich protein I</fullName>
        <shortName>SPR-I</shortName>
    </alternativeName>
</protein>
<comment type="function">
    <text>Cross-linked envelope protein of keratinocytes. It is a keratinocyte protein that first appears in the cell cytosol, but ultimately becomes cross-linked to membrane proteins by transglutaminase. All that results in the formation of an insoluble envelope beneath the plasma membrane.</text>
</comment>
<comment type="subcellular location">
    <subcellularLocation>
        <location>Cytoplasm</location>
    </subcellularLocation>
</comment>
<comment type="tissue specificity">
    <text>Suprabasal layers of squamous-differentiated tissues such as epidermis, esophagus, tongue and trachea.</text>
</comment>
<comment type="developmental stage">
    <text>Expressed during differentiation of squamous cells.</text>
</comment>
<comment type="induction">
    <text>During squamous differentiation of epidermal keratinocytes. This induction is repressed by retinoids.</text>
</comment>
<comment type="similarity">
    <text evidence="3">Belongs to the cornifin (SPRR) family.</text>
</comment>
<accession>P35324</accession>